<keyword id="KW-0687">Ribonucleoprotein</keyword>
<keyword id="KW-0689">Ribosomal protein</keyword>
<keyword id="KW-0694">RNA-binding</keyword>
<keyword id="KW-0699">rRNA-binding</keyword>
<keyword id="KW-0820">tRNA-binding</keyword>
<proteinExistence type="inferred from homology"/>
<reference key="1">
    <citation type="journal article" date="2009" name="BMC Genomics">
        <title>Pseudogene accumulation in the evolutionary histories of Salmonella enterica serovars Paratyphi A and Typhi.</title>
        <authorList>
            <person name="Holt K.E."/>
            <person name="Thomson N.R."/>
            <person name="Wain J."/>
            <person name="Langridge G.C."/>
            <person name="Hasan R."/>
            <person name="Bhutta Z.A."/>
            <person name="Quail M.A."/>
            <person name="Norbertczak H."/>
            <person name="Walker D."/>
            <person name="Simmonds M."/>
            <person name="White B."/>
            <person name="Bason N."/>
            <person name="Mungall K."/>
            <person name="Dougan G."/>
            <person name="Parkhill J."/>
        </authorList>
    </citation>
    <scope>NUCLEOTIDE SEQUENCE [LARGE SCALE GENOMIC DNA]</scope>
    <source>
        <strain>AKU_12601</strain>
    </source>
</reference>
<accession>B5BGZ3</accession>
<organism>
    <name type="scientific">Salmonella paratyphi A (strain AKU_12601)</name>
    <dbReference type="NCBI Taxonomy" id="554290"/>
    <lineage>
        <taxon>Bacteria</taxon>
        <taxon>Pseudomonadati</taxon>
        <taxon>Pseudomonadota</taxon>
        <taxon>Gammaproteobacteria</taxon>
        <taxon>Enterobacterales</taxon>
        <taxon>Enterobacteriaceae</taxon>
        <taxon>Salmonella</taxon>
    </lineage>
</organism>
<dbReference type="EMBL" id="FM200053">
    <property type="protein sequence ID" value="CAR61343.1"/>
    <property type="molecule type" value="Genomic_DNA"/>
</dbReference>
<dbReference type="RefSeq" id="WP_001138042.1">
    <property type="nucleotide sequence ID" value="NC_011147.1"/>
</dbReference>
<dbReference type="SMR" id="B5BGZ3"/>
<dbReference type="GeneID" id="92804583"/>
<dbReference type="KEGG" id="sek:SSPA3092"/>
<dbReference type="HOGENOM" id="CLU_072226_1_1_6"/>
<dbReference type="Proteomes" id="UP000001869">
    <property type="component" value="Chromosome"/>
</dbReference>
<dbReference type="GO" id="GO:0015935">
    <property type="term" value="C:small ribosomal subunit"/>
    <property type="evidence" value="ECO:0007669"/>
    <property type="project" value="InterPro"/>
</dbReference>
<dbReference type="GO" id="GO:0019843">
    <property type="term" value="F:rRNA binding"/>
    <property type="evidence" value="ECO:0007669"/>
    <property type="project" value="UniProtKB-UniRule"/>
</dbReference>
<dbReference type="GO" id="GO:0003735">
    <property type="term" value="F:structural constituent of ribosome"/>
    <property type="evidence" value="ECO:0007669"/>
    <property type="project" value="InterPro"/>
</dbReference>
<dbReference type="GO" id="GO:0000049">
    <property type="term" value="F:tRNA binding"/>
    <property type="evidence" value="ECO:0007669"/>
    <property type="project" value="UniProtKB-UniRule"/>
</dbReference>
<dbReference type="GO" id="GO:0006412">
    <property type="term" value="P:translation"/>
    <property type="evidence" value="ECO:0007669"/>
    <property type="project" value="UniProtKB-UniRule"/>
</dbReference>
<dbReference type="CDD" id="cd14869">
    <property type="entry name" value="uS7_Bacteria"/>
    <property type="match status" value="1"/>
</dbReference>
<dbReference type="FunFam" id="1.10.455.10:FF:000001">
    <property type="entry name" value="30S ribosomal protein S7"/>
    <property type="match status" value="1"/>
</dbReference>
<dbReference type="Gene3D" id="1.10.455.10">
    <property type="entry name" value="Ribosomal protein S7 domain"/>
    <property type="match status" value="1"/>
</dbReference>
<dbReference type="HAMAP" id="MF_00480_B">
    <property type="entry name" value="Ribosomal_uS7_B"/>
    <property type="match status" value="1"/>
</dbReference>
<dbReference type="InterPro" id="IPR000235">
    <property type="entry name" value="Ribosomal_uS7"/>
</dbReference>
<dbReference type="InterPro" id="IPR005717">
    <property type="entry name" value="Ribosomal_uS7_bac/org-type"/>
</dbReference>
<dbReference type="InterPro" id="IPR020606">
    <property type="entry name" value="Ribosomal_uS7_CS"/>
</dbReference>
<dbReference type="InterPro" id="IPR023798">
    <property type="entry name" value="Ribosomal_uS7_dom"/>
</dbReference>
<dbReference type="InterPro" id="IPR036823">
    <property type="entry name" value="Ribosomal_uS7_dom_sf"/>
</dbReference>
<dbReference type="NCBIfam" id="TIGR01029">
    <property type="entry name" value="rpsG_bact"/>
    <property type="match status" value="1"/>
</dbReference>
<dbReference type="PANTHER" id="PTHR11205">
    <property type="entry name" value="RIBOSOMAL PROTEIN S7"/>
    <property type="match status" value="1"/>
</dbReference>
<dbReference type="Pfam" id="PF00177">
    <property type="entry name" value="Ribosomal_S7"/>
    <property type="match status" value="1"/>
</dbReference>
<dbReference type="PIRSF" id="PIRSF002122">
    <property type="entry name" value="RPS7p_RPS7a_RPS5e_RPS7o"/>
    <property type="match status" value="1"/>
</dbReference>
<dbReference type="SUPFAM" id="SSF47973">
    <property type="entry name" value="Ribosomal protein S7"/>
    <property type="match status" value="1"/>
</dbReference>
<dbReference type="PROSITE" id="PS00052">
    <property type="entry name" value="RIBOSOMAL_S7"/>
    <property type="match status" value="1"/>
</dbReference>
<sequence length="156" mass="17590">MPRRRVIGQRKILPDPKFGSELLAKFVNILMVDGKKSTAESIVYSALETLAQRSGKSELEAFEVALENVRPTVEVKSRRVGGSTYQVPVEVRPVRRNALAMRWIVEAARKRGDKSMALRLANELSDAADNKGTAVKKREDVHRMAEANKAFAHYRW</sequence>
<gene>
    <name evidence="1" type="primary">rpsG</name>
    <name type="ordered locus">SSPA3092</name>
</gene>
<feature type="chain" id="PRO_1000125999" description="Small ribosomal subunit protein uS7">
    <location>
        <begin position="1"/>
        <end position="156"/>
    </location>
</feature>
<protein>
    <recommendedName>
        <fullName evidence="1">Small ribosomal subunit protein uS7</fullName>
    </recommendedName>
    <alternativeName>
        <fullName evidence="2">30S ribosomal protein S7</fullName>
    </alternativeName>
</protein>
<evidence type="ECO:0000255" key="1">
    <source>
        <dbReference type="HAMAP-Rule" id="MF_00480"/>
    </source>
</evidence>
<evidence type="ECO:0000305" key="2"/>
<comment type="function">
    <text evidence="1">One of the primary rRNA binding proteins, it binds directly to 16S rRNA where it nucleates assembly of the head domain of the 30S subunit. Is located at the subunit interface close to the decoding center, probably blocks exit of the E-site tRNA.</text>
</comment>
<comment type="subunit">
    <text evidence="1">Part of the 30S ribosomal subunit. Contacts proteins S9 and S11.</text>
</comment>
<comment type="similarity">
    <text evidence="1">Belongs to the universal ribosomal protein uS7 family.</text>
</comment>
<name>RS7_SALPK</name>